<dbReference type="EC" id="2.1.1.182" evidence="1"/>
<dbReference type="EMBL" id="CP000412">
    <property type="protein sequence ID" value="ABJ57962.1"/>
    <property type="molecule type" value="Genomic_DNA"/>
</dbReference>
<dbReference type="RefSeq" id="WP_011543621.1">
    <property type="nucleotide sequence ID" value="NC_008529.1"/>
</dbReference>
<dbReference type="SMR" id="Q04C60"/>
<dbReference type="KEGG" id="lbu:LBUL_0300"/>
<dbReference type="HOGENOM" id="CLU_041220_0_0_9"/>
<dbReference type="BioCyc" id="LDEL321956:LBUL_RS01400-MONOMER"/>
<dbReference type="GO" id="GO:0005829">
    <property type="term" value="C:cytosol"/>
    <property type="evidence" value="ECO:0007669"/>
    <property type="project" value="TreeGrafter"/>
</dbReference>
<dbReference type="GO" id="GO:0052908">
    <property type="term" value="F:16S rRNA (adenine(1518)-N(6)/adenine(1519)-N(6))-dimethyltransferase activity"/>
    <property type="evidence" value="ECO:0007669"/>
    <property type="project" value="UniProtKB-EC"/>
</dbReference>
<dbReference type="GO" id="GO:0003723">
    <property type="term" value="F:RNA binding"/>
    <property type="evidence" value="ECO:0007669"/>
    <property type="project" value="UniProtKB-KW"/>
</dbReference>
<dbReference type="FunFam" id="1.10.8.100:FF:000001">
    <property type="entry name" value="Ribosomal RNA small subunit methyltransferase A"/>
    <property type="match status" value="1"/>
</dbReference>
<dbReference type="FunFam" id="3.40.50.150:FF:000023">
    <property type="entry name" value="Ribosomal RNA small subunit methyltransferase A"/>
    <property type="match status" value="1"/>
</dbReference>
<dbReference type="Gene3D" id="1.10.8.100">
    <property type="entry name" value="Ribosomal RNA adenine dimethylase-like, domain 2"/>
    <property type="match status" value="1"/>
</dbReference>
<dbReference type="Gene3D" id="3.40.50.150">
    <property type="entry name" value="Vaccinia Virus protein VP39"/>
    <property type="match status" value="1"/>
</dbReference>
<dbReference type="HAMAP" id="MF_00607">
    <property type="entry name" value="16SrRNA_methyltr_A"/>
    <property type="match status" value="1"/>
</dbReference>
<dbReference type="InterPro" id="IPR001737">
    <property type="entry name" value="KsgA/Erm"/>
</dbReference>
<dbReference type="InterPro" id="IPR023165">
    <property type="entry name" value="rRNA_Ade_diMease-like_C"/>
</dbReference>
<dbReference type="InterPro" id="IPR020596">
    <property type="entry name" value="rRNA_Ade_Mease_Trfase_CS"/>
</dbReference>
<dbReference type="InterPro" id="IPR020598">
    <property type="entry name" value="rRNA_Ade_methylase_Trfase_N"/>
</dbReference>
<dbReference type="InterPro" id="IPR011530">
    <property type="entry name" value="rRNA_adenine_dimethylase"/>
</dbReference>
<dbReference type="InterPro" id="IPR029063">
    <property type="entry name" value="SAM-dependent_MTases_sf"/>
</dbReference>
<dbReference type="NCBIfam" id="TIGR00755">
    <property type="entry name" value="ksgA"/>
    <property type="match status" value="1"/>
</dbReference>
<dbReference type="PANTHER" id="PTHR11727">
    <property type="entry name" value="DIMETHYLADENOSINE TRANSFERASE"/>
    <property type="match status" value="1"/>
</dbReference>
<dbReference type="PANTHER" id="PTHR11727:SF7">
    <property type="entry name" value="DIMETHYLADENOSINE TRANSFERASE-RELATED"/>
    <property type="match status" value="1"/>
</dbReference>
<dbReference type="Pfam" id="PF00398">
    <property type="entry name" value="RrnaAD"/>
    <property type="match status" value="1"/>
</dbReference>
<dbReference type="SMART" id="SM00650">
    <property type="entry name" value="rADc"/>
    <property type="match status" value="1"/>
</dbReference>
<dbReference type="SUPFAM" id="SSF53335">
    <property type="entry name" value="S-adenosyl-L-methionine-dependent methyltransferases"/>
    <property type="match status" value="1"/>
</dbReference>
<dbReference type="PROSITE" id="PS01131">
    <property type="entry name" value="RRNA_A_DIMETH"/>
    <property type="match status" value="1"/>
</dbReference>
<dbReference type="PROSITE" id="PS51689">
    <property type="entry name" value="SAM_RNA_A_N6_MT"/>
    <property type="match status" value="1"/>
</dbReference>
<comment type="function">
    <text evidence="1">Specifically dimethylates two adjacent adenosines (A1518 and A1519) in the loop of a conserved hairpin near the 3'-end of 16S rRNA in the 30S particle. May play a critical role in biogenesis of 30S subunits.</text>
</comment>
<comment type="catalytic activity">
    <reaction evidence="1">
        <text>adenosine(1518)/adenosine(1519) in 16S rRNA + 4 S-adenosyl-L-methionine = N(6)-dimethyladenosine(1518)/N(6)-dimethyladenosine(1519) in 16S rRNA + 4 S-adenosyl-L-homocysteine + 4 H(+)</text>
        <dbReference type="Rhea" id="RHEA:19609"/>
        <dbReference type="Rhea" id="RHEA-COMP:10232"/>
        <dbReference type="Rhea" id="RHEA-COMP:10233"/>
        <dbReference type="ChEBI" id="CHEBI:15378"/>
        <dbReference type="ChEBI" id="CHEBI:57856"/>
        <dbReference type="ChEBI" id="CHEBI:59789"/>
        <dbReference type="ChEBI" id="CHEBI:74411"/>
        <dbReference type="ChEBI" id="CHEBI:74493"/>
        <dbReference type="EC" id="2.1.1.182"/>
    </reaction>
</comment>
<comment type="subcellular location">
    <subcellularLocation>
        <location evidence="1">Cytoplasm</location>
    </subcellularLocation>
</comment>
<comment type="similarity">
    <text evidence="1">Belongs to the class I-like SAM-binding methyltransferase superfamily. rRNA adenine N(6)-methyltransferase family. RsmA subfamily.</text>
</comment>
<sequence>MTNRIPIASPVRTAAIVNRYFVHAKKNLGQNFLVDLDAVQGIVRAAGIEPGDQVVEVGPGIGSLTEQLLLAGGKVAAYEVDQSLPEILANELPEKVDGQDLDQRFKLIMKDVLKADFATDLAGFFDLSKPVKVVANLPYYITTPIIFNLLESSLDFTSLTLMMQKEVAERLAAQPGSKAYGPLSIAVQTQMSVDLALEVGHASFMPQPKVDSAVVVLTPLEKPADVGDRKQFNRVVKLCFAQRRKTLANNLKTLLPDKEDREKLLADLDLDPRQRPEQLAISDFIRISQAIAEMNK</sequence>
<proteinExistence type="inferred from homology"/>
<keyword id="KW-0963">Cytoplasm</keyword>
<keyword id="KW-0489">Methyltransferase</keyword>
<keyword id="KW-0694">RNA-binding</keyword>
<keyword id="KW-0698">rRNA processing</keyword>
<keyword id="KW-0949">S-adenosyl-L-methionine</keyword>
<keyword id="KW-0808">Transferase</keyword>
<feature type="chain" id="PRO_1000056630" description="Ribosomal RNA small subunit methyltransferase A">
    <location>
        <begin position="1"/>
        <end position="296"/>
    </location>
</feature>
<feature type="binding site" evidence="1">
    <location>
        <position position="31"/>
    </location>
    <ligand>
        <name>S-adenosyl-L-methionine</name>
        <dbReference type="ChEBI" id="CHEBI:59789"/>
    </ligand>
</feature>
<feature type="binding site" evidence="1">
    <location>
        <position position="33"/>
    </location>
    <ligand>
        <name>S-adenosyl-L-methionine</name>
        <dbReference type="ChEBI" id="CHEBI:59789"/>
    </ligand>
</feature>
<feature type="binding site" evidence="1">
    <location>
        <position position="58"/>
    </location>
    <ligand>
        <name>S-adenosyl-L-methionine</name>
        <dbReference type="ChEBI" id="CHEBI:59789"/>
    </ligand>
</feature>
<feature type="binding site" evidence="1">
    <location>
        <position position="79"/>
    </location>
    <ligand>
        <name>S-adenosyl-L-methionine</name>
        <dbReference type="ChEBI" id="CHEBI:59789"/>
    </ligand>
</feature>
<feature type="binding site" evidence="1">
    <location>
        <position position="111"/>
    </location>
    <ligand>
        <name>S-adenosyl-L-methionine</name>
        <dbReference type="ChEBI" id="CHEBI:59789"/>
    </ligand>
</feature>
<feature type="binding site" evidence="1">
    <location>
        <position position="136"/>
    </location>
    <ligand>
        <name>S-adenosyl-L-methionine</name>
        <dbReference type="ChEBI" id="CHEBI:59789"/>
    </ligand>
</feature>
<evidence type="ECO:0000255" key="1">
    <source>
        <dbReference type="HAMAP-Rule" id="MF_00607"/>
    </source>
</evidence>
<accession>Q04C60</accession>
<organism>
    <name type="scientific">Lactobacillus delbrueckii subsp. bulgaricus (strain ATCC BAA-365 / Lb-18)</name>
    <dbReference type="NCBI Taxonomy" id="321956"/>
    <lineage>
        <taxon>Bacteria</taxon>
        <taxon>Bacillati</taxon>
        <taxon>Bacillota</taxon>
        <taxon>Bacilli</taxon>
        <taxon>Lactobacillales</taxon>
        <taxon>Lactobacillaceae</taxon>
        <taxon>Lactobacillus</taxon>
    </lineage>
</organism>
<reference key="1">
    <citation type="journal article" date="2006" name="Proc. Natl. Acad. Sci. U.S.A.">
        <title>Comparative genomics of the lactic acid bacteria.</title>
        <authorList>
            <person name="Makarova K.S."/>
            <person name="Slesarev A."/>
            <person name="Wolf Y.I."/>
            <person name="Sorokin A."/>
            <person name="Mirkin B."/>
            <person name="Koonin E.V."/>
            <person name="Pavlov A."/>
            <person name="Pavlova N."/>
            <person name="Karamychev V."/>
            <person name="Polouchine N."/>
            <person name="Shakhova V."/>
            <person name="Grigoriev I."/>
            <person name="Lou Y."/>
            <person name="Rohksar D."/>
            <person name="Lucas S."/>
            <person name="Huang K."/>
            <person name="Goodstein D.M."/>
            <person name="Hawkins T."/>
            <person name="Plengvidhya V."/>
            <person name="Welker D."/>
            <person name="Hughes J."/>
            <person name="Goh Y."/>
            <person name="Benson A."/>
            <person name="Baldwin K."/>
            <person name="Lee J.-H."/>
            <person name="Diaz-Muniz I."/>
            <person name="Dosti B."/>
            <person name="Smeianov V."/>
            <person name="Wechter W."/>
            <person name="Barabote R."/>
            <person name="Lorca G."/>
            <person name="Altermann E."/>
            <person name="Barrangou R."/>
            <person name="Ganesan B."/>
            <person name="Xie Y."/>
            <person name="Rawsthorne H."/>
            <person name="Tamir D."/>
            <person name="Parker C."/>
            <person name="Breidt F."/>
            <person name="Broadbent J.R."/>
            <person name="Hutkins R."/>
            <person name="O'Sullivan D."/>
            <person name="Steele J."/>
            <person name="Unlu G."/>
            <person name="Saier M.H. Jr."/>
            <person name="Klaenhammer T."/>
            <person name="Richardson P."/>
            <person name="Kozyavkin S."/>
            <person name="Weimer B.C."/>
            <person name="Mills D.A."/>
        </authorList>
    </citation>
    <scope>NUCLEOTIDE SEQUENCE [LARGE SCALE GENOMIC DNA]</scope>
    <source>
        <strain>ATCC BAA-365 / Lb-18</strain>
    </source>
</reference>
<protein>
    <recommendedName>
        <fullName evidence="1">Ribosomal RNA small subunit methyltransferase A</fullName>
        <ecNumber evidence="1">2.1.1.182</ecNumber>
    </recommendedName>
    <alternativeName>
        <fullName evidence="1">16S rRNA (adenine(1518)-N(6)/adenine(1519)-N(6))-dimethyltransferase</fullName>
    </alternativeName>
    <alternativeName>
        <fullName evidence="1">16S rRNA dimethyladenosine transferase</fullName>
    </alternativeName>
    <alternativeName>
        <fullName evidence="1">16S rRNA dimethylase</fullName>
    </alternativeName>
    <alternativeName>
        <fullName evidence="1">S-adenosylmethionine-6-N', N'-adenosyl(rRNA) dimethyltransferase</fullName>
    </alternativeName>
</protein>
<gene>
    <name evidence="1" type="primary">rsmA</name>
    <name evidence="1" type="synonym">ksgA</name>
    <name type="ordered locus">LBUL_0300</name>
</gene>
<name>RSMA_LACDB</name>